<gene>
    <name evidence="1" type="primary">rplO</name>
    <name type="ordered locus">AM1_4713</name>
</gene>
<reference key="1">
    <citation type="journal article" date="2008" name="Proc. Natl. Acad. Sci. U.S.A.">
        <title>Niche adaptation and genome expansion in the chlorophyll d-producing cyanobacterium Acaryochloris marina.</title>
        <authorList>
            <person name="Swingley W.D."/>
            <person name="Chen M."/>
            <person name="Cheung P.C."/>
            <person name="Conrad A.L."/>
            <person name="Dejesa L.C."/>
            <person name="Hao J."/>
            <person name="Honchak B.M."/>
            <person name="Karbach L.E."/>
            <person name="Kurdoglu A."/>
            <person name="Lahiri S."/>
            <person name="Mastrian S.D."/>
            <person name="Miyashita H."/>
            <person name="Page L."/>
            <person name="Ramakrishna P."/>
            <person name="Satoh S."/>
            <person name="Sattley W.M."/>
            <person name="Shimada Y."/>
            <person name="Taylor H.L."/>
            <person name="Tomo T."/>
            <person name="Tsuchiya T."/>
            <person name="Wang Z.T."/>
            <person name="Raymond J."/>
            <person name="Mimuro M."/>
            <person name="Blankenship R.E."/>
            <person name="Touchman J.W."/>
        </authorList>
    </citation>
    <scope>NUCLEOTIDE SEQUENCE [LARGE SCALE GENOMIC DNA]</scope>
    <source>
        <strain>MBIC 11017</strain>
    </source>
</reference>
<protein>
    <recommendedName>
        <fullName evidence="1">Large ribosomal subunit protein uL15</fullName>
    </recommendedName>
    <alternativeName>
        <fullName evidence="3">50S ribosomal protein L15</fullName>
    </alternativeName>
</protein>
<proteinExistence type="inferred from homology"/>
<accession>B0C1F0</accession>
<sequence>MRLNDPKPKTGSQHRRRRVGRGIAAGQGASCGFGMRGQKSRSGRPTRPGFEGGQNPLYRRVPKLKHFTLINQKQYTTINVGKLNELKAKSDVTLESLMAEGIITSNDGPLKVLGDGELTVALNVQAAAATQSAIAKVEGAGGSFQSTES</sequence>
<comment type="function">
    <text evidence="1">Binds to the 23S rRNA.</text>
</comment>
<comment type="subunit">
    <text evidence="1">Part of the 50S ribosomal subunit.</text>
</comment>
<comment type="similarity">
    <text evidence="1">Belongs to the universal ribosomal protein uL15 family.</text>
</comment>
<keyword id="KW-1185">Reference proteome</keyword>
<keyword id="KW-0687">Ribonucleoprotein</keyword>
<keyword id="KW-0689">Ribosomal protein</keyword>
<keyword id="KW-0694">RNA-binding</keyword>
<keyword id="KW-0699">rRNA-binding</keyword>
<organism>
    <name type="scientific">Acaryochloris marina (strain MBIC 11017)</name>
    <dbReference type="NCBI Taxonomy" id="329726"/>
    <lineage>
        <taxon>Bacteria</taxon>
        <taxon>Bacillati</taxon>
        <taxon>Cyanobacteriota</taxon>
        <taxon>Cyanophyceae</taxon>
        <taxon>Acaryochloridales</taxon>
        <taxon>Acaryochloridaceae</taxon>
        <taxon>Acaryochloris</taxon>
    </lineage>
</organism>
<name>RL15_ACAM1</name>
<evidence type="ECO:0000255" key="1">
    <source>
        <dbReference type="HAMAP-Rule" id="MF_01341"/>
    </source>
</evidence>
<evidence type="ECO:0000256" key="2">
    <source>
        <dbReference type="SAM" id="MobiDB-lite"/>
    </source>
</evidence>
<evidence type="ECO:0000305" key="3"/>
<feature type="chain" id="PRO_1000086697" description="Large ribosomal subunit protein uL15">
    <location>
        <begin position="1"/>
        <end position="149"/>
    </location>
</feature>
<feature type="region of interest" description="Disordered" evidence="2">
    <location>
        <begin position="1"/>
        <end position="57"/>
    </location>
</feature>
<feature type="compositionally biased region" description="Gly residues" evidence="2">
    <location>
        <begin position="23"/>
        <end position="35"/>
    </location>
</feature>
<dbReference type="EMBL" id="CP000828">
    <property type="protein sequence ID" value="ABW29685.1"/>
    <property type="molecule type" value="Genomic_DNA"/>
</dbReference>
<dbReference type="RefSeq" id="WP_012164972.1">
    <property type="nucleotide sequence ID" value="NC_009925.1"/>
</dbReference>
<dbReference type="SMR" id="B0C1F0"/>
<dbReference type="STRING" id="329726.AM1_4713"/>
<dbReference type="KEGG" id="amr:AM1_4713"/>
<dbReference type="eggNOG" id="COG0200">
    <property type="taxonomic scope" value="Bacteria"/>
</dbReference>
<dbReference type="HOGENOM" id="CLU_055188_4_2_3"/>
<dbReference type="OrthoDB" id="9810293at2"/>
<dbReference type="Proteomes" id="UP000000268">
    <property type="component" value="Chromosome"/>
</dbReference>
<dbReference type="GO" id="GO:0022625">
    <property type="term" value="C:cytosolic large ribosomal subunit"/>
    <property type="evidence" value="ECO:0007669"/>
    <property type="project" value="TreeGrafter"/>
</dbReference>
<dbReference type="GO" id="GO:0019843">
    <property type="term" value="F:rRNA binding"/>
    <property type="evidence" value="ECO:0007669"/>
    <property type="project" value="UniProtKB-UniRule"/>
</dbReference>
<dbReference type="GO" id="GO:0003735">
    <property type="term" value="F:structural constituent of ribosome"/>
    <property type="evidence" value="ECO:0007669"/>
    <property type="project" value="InterPro"/>
</dbReference>
<dbReference type="GO" id="GO:0006412">
    <property type="term" value="P:translation"/>
    <property type="evidence" value="ECO:0007669"/>
    <property type="project" value="UniProtKB-UniRule"/>
</dbReference>
<dbReference type="Gene3D" id="3.100.10.10">
    <property type="match status" value="1"/>
</dbReference>
<dbReference type="HAMAP" id="MF_01341">
    <property type="entry name" value="Ribosomal_uL15"/>
    <property type="match status" value="1"/>
</dbReference>
<dbReference type="InterPro" id="IPR030878">
    <property type="entry name" value="Ribosomal_uL15"/>
</dbReference>
<dbReference type="InterPro" id="IPR021131">
    <property type="entry name" value="Ribosomal_uL15/eL18"/>
</dbReference>
<dbReference type="InterPro" id="IPR036227">
    <property type="entry name" value="Ribosomal_uL15/eL18_sf"/>
</dbReference>
<dbReference type="InterPro" id="IPR005749">
    <property type="entry name" value="Ribosomal_uL15_bac-type"/>
</dbReference>
<dbReference type="InterPro" id="IPR001196">
    <property type="entry name" value="Ribosomal_uL15_CS"/>
</dbReference>
<dbReference type="NCBIfam" id="TIGR01071">
    <property type="entry name" value="rplO_bact"/>
    <property type="match status" value="1"/>
</dbReference>
<dbReference type="PANTHER" id="PTHR12934">
    <property type="entry name" value="50S RIBOSOMAL PROTEIN L15"/>
    <property type="match status" value="1"/>
</dbReference>
<dbReference type="PANTHER" id="PTHR12934:SF11">
    <property type="entry name" value="LARGE RIBOSOMAL SUBUNIT PROTEIN UL15M"/>
    <property type="match status" value="1"/>
</dbReference>
<dbReference type="Pfam" id="PF00828">
    <property type="entry name" value="Ribosomal_L27A"/>
    <property type="match status" value="1"/>
</dbReference>
<dbReference type="SUPFAM" id="SSF52080">
    <property type="entry name" value="Ribosomal proteins L15p and L18e"/>
    <property type="match status" value="1"/>
</dbReference>
<dbReference type="PROSITE" id="PS00475">
    <property type="entry name" value="RIBOSOMAL_L15"/>
    <property type="match status" value="1"/>
</dbReference>